<protein>
    <recommendedName>
        <fullName evidence="1">A-type ATP synthase subunit B</fullName>
    </recommendedName>
</protein>
<comment type="function">
    <text evidence="1">Component of the A-type ATP synthase that produces ATP from ADP in the presence of a proton gradient across the membrane. The B chain is a regulatory subunit.</text>
</comment>
<comment type="subunit">
    <text evidence="1">Has multiple subunits with at least A(3), B(3), C, D, E, F, H, I and proteolipid K(x).</text>
</comment>
<comment type="subcellular location">
    <subcellularLocation>
        <location evidence="1">Cell membrane</location>
        <topology evidence="1">Peripheral membrane protein</topology>
    </subcellularLocation>
</comment>
<comment type="similarity">
    <text evidence="1">Belongs to the ATPase alpha/beta chains family.</text>
</comment>
<accession>A6UT36</accession>
<keyword id="KW-0066">ATP synthesis</keyword>
<keyword id="KW-1003">Cell membrane</keyword>
<keyword id="KW-0375">Hydrogen ion transport</keyword>
<keyword id="KW-0406">Ion transport</keyword>
<keyword id="KW-0472">Membrane</keyword>
<keyword id="KW-0813">Transport</keyword>
<proteinExistence type="inferred from homology"/>
<gene>
    <name evidence="1" type="primary">atpB</name>
    <name type="ordered locus">Maeo_0066</name>
</gene>
<organism>
    <name type="scientific">Methanococcus aeolicus (strain ATCC BAA-1280 / DSM 17508 / OCM 812 / Nankai-3)</name>
    <dbReference type="NCBI Taxonomy" id="419665"/>
    <lineage>
        <taxon>Archaea</taxon>
        <taxon>Methanobacteriati</taxon>
        <taxon>Methanobacteriota</taxon>
        <taxon>Methanomada group</taxon>
        <taxon>Methanococci</taxon>
        <taxon>Methanococcales</taxon>
        <taxon>Methanococcaceae</taxon>
        <taxon>Methanococcus</taxon>
    </lineage>
</organism>
<name>AATB_META3</name>
<sequence length="464" mass="50744">MSSLEKNIEYTSVSSIAGPLIVVEGIKGVAYGEIVSITCPSGEKRTGQVLEAREDVAVVQVFEGTTALNTSETKIRFVGETAKLGVSTDMLGRIFNGAGKPLDGGPDIIAEDKIDINGYPLNPVSRQSPNDFVQTGISTIDGTNTLVRGQKIPIFSGSGLPHNLLAAQIARQAKVRGSDEQFAVVFAAMGITAEESNYFMNEFKRTGALENAVVFINLADDPAIERILTPRIALTTAEYLAYEKGMHVLVIMTDITNYCEALREIAAARNEVPGRRGYPGYMYTDLATLYERAGRVKGKSGTVTQIPILTMPHDDITHPIPDLTGYITEGQIVLSRELNRKGIYPPVDVLPSLSRLAGNGVGEGKTRDDHSKVISQVYAGYAEGIGLRDLVAVVGEESLSERDRAYLKLADVFEKKFVQQGKDEDRSIEETLDIVWDILTILPEEELKRVSEDLIKKYHPNHKK</sequence>
<dbReference type="EMBL" id="CP000743">
    <property type="protein sequence ID" value="ABR55658.1"/>
    <property type="molecule type" value="Genomic_DNA"/>
</dbReference>
<dbReference type="RefSeq" id="WP_011972790.1">
    <property type="nucleotide sequence ID" value="NC_009635.1"/>
</dbReference>
<dbReference type="SMR" id="A6UT36"/>
<dbReference type="STRING" id="419665.Maeo_0066"/>
<dbReference type="GeneID" id="5327499"/>
<dbReference type="KEGG" id="mae:Maeo_0066"/>
<dbReference type="eggNOG" id="arCOG00865">
    <property type="taxonomic scope" value="Archaea"/>
</dbReference>
<dbReference type="HOGENOM" id="CLU_022916_0_0_2"/>
<dbReference type="OrthoDB" id="32941at2157"/>
<dbReference type="Proteomes" id="UP000001106">
    <property type="component" value="Chromosome"/>
</dbReference>
<dbReference type="GO" id="GO:0005886">
    <property type="term" value="C:plasma membrane"/>
    <property type="evidence" value="ECO:0007669"/>
    <property type="project" value="UniProtKB-SubCell"/>
</dbReference>
<dbReference type="GO" id="GO:0005524">
    <property type="term" value="F:ATP binding"/>
    <property type="evidence" value="ECO:0007669"/>
    <property type="project" value="UniProtKB-UniRule"/>
</dbReference>
<dbReference type="GO" id="GO:0046933">
    <property type="term" value="F:proton-transporting ATP synthase activity, rotational mechanism"/>
    <property type="evidence" value="ECO:0007669"/>
    <property type="project" value="UniProtKB-UniRule"/>
</dbReference>
<dbReference type="GO" id="GO:0042777">
    <property type="term" value="P:proton motive force-driven plasma membrane ATP synthesis"/>
    <property type="evidence" value="ECO:0007669"/>
    <property type="project" value="UniProtKB-UniRule"/>
</dbReference>
<dbReference type="CDD" id="cd18112">
    <property type="entry name" value="ATP-synt_V_A-type_beta_C"/>
    <property type="match status" value="1"/>
</dbReference>
<dbReference type="CDD" id="cd18118">
    <property type="entry name" value="ATP-synt_V_A-type_beta_N"/>
    <property type="match status" value="1"/>
</dbReference>
<dbReference type="CDD" id="cd01135">
    <property type="entry name" value="V_A-ATPase_B"/>
    <property type="match status" value="1"/>
</dbReference>
<dbReference type="Gene3D" id="3.40.50.12240">
    <property type="match status" value="1"/>
</dbReference>
<dbReference type="HAMAP" id="MF_00310">
    <property type="entry name" value="ATP_synth_B_arch"/>
    <property type="match status" value="1"/>
</dbReference>
<dbReference type="InterPro" id="IPR055190">
    <property type="entry name" value="ATP-synt_VA_C"/>
</dbReference>
<dbReference type="InterPro" id="IPR020003">
    <property type="entry name" value="ATPase_a/bsu_AS"/>
</dbReference>
<dbReference type="InterPro" id="IPR004100">
    <property type="entry name" value="ATPase_F1/V1/A1_a/bsu_N"/>
</dbReference>
<dbReference type="InterPro" id="IPR000194">
    <property type="entry name" value="ATPase_F1/V1/A1_a/bsu_nucl-bd"/>
</dbReference>
<dbReference type="InterPro" id="IPR027417">
    <property type="entry name" value="P-loop_NTPase"/>
</dbReference>
<dbReference type="InterPro" id="IPR022879">
    <property type="entry name" value="V-ATPase_su_B/beta"/>
</dbReference>
<dbReference type="NCBIfam" id="NF003235">
    <property type="entry name" value="PRK04196.1"/>
    <property type="match status" value="1"/>
</dbReference>
<dbReference type="PANTHER" id="PTHR43389">
    <property type="entry name" value="V-TYPE PROTON ATPASE SUBUNIT B"/>
    <property type="match status" value="1"/>
</dbReference>
<dbReference type="PANTHER" id="PTHR43389:SF4">
    <property type="entry name" value="V-TYPE PROTON ATPASE SUBUNIT B"/>
    <property type="match status" value="1"/>
</dbReference>
<dbReference type="Pfam" id="PF00006">
    <property type="entry name" value="ATP-synt_ab"/>
    <property type="match status" value="1"/>
</dbReference>
<dbReference type="Pfam" id="PF02874">
    <property type="entry name" value="ATP-synt_ab_N"/>
    <property type="match status" value="1"/>
</dbReference>
<dbReference type="Pfam" id="PF22919">
    <property type="entry name" value="ATP-synt_VA_C"/>
    <property type="match status" value="1"/>
</dbReference>
<dbReference type="PIRSF" id="PIRSF039114">
    <property type="entry name" value="V-ATPsynth_beta/V-ATPase_B"/>
    <property type="match status" value="1"/>
</dbReference>
<dbReference type="SUPFAM" id="SSF47917">
    <property type="entry name" value="C-terminal domain of alpha and beta subunits of F1 ATP synthase"/>
    <property type="match status" value="1"/>
</dbReference>
<dbReference type="SUPFAM" id="SSF52540">
    <property type="entry name" value="P-loop containing nucleoside triphosphate hydrolases"/>
    <property type="match status" value="1"/>
</dbReference>
<dbReference type="PROSITE" id="PS00152">
    <property type="entry name" value="ATPASE_ALPHA_BETA"/>
    <property type="match status" value="1"/>
</dbReference>
<feature type="chain" id="PRO_1000059373" description="A-type ATP synthase subunit B">
    <location>
        <begin position="1"/>
        <end position="464"/>
    </location>
</feature>
<evidence type="ECO:0000255" key="1">
    <source>
        <dbReference type="HAMAP-Rule" id="MF_00310"/>
    </source>
</evidence>
<reference key="1">
    <citation type="submission" date="2007-06" db="EMBL/GenBank/DDBJ databases">
        <title>Complete sequence of Methanococcus aeolicus Nankai-3.</title>
        <authorList>
            <consortium name="US DOE Joint Genome Institute"/>
            <person name="Copeland A."/>
            <person name="Lucas S."/>
            <person name="Lapidus A."/>
            <person name="Barry K."/>
            <person name="Glavina del Rio T."/>
            <person name="Dalin E."/>
            <person name="Tice H."/>
            <person name="Pitluck S."/>
            <person name="Chain P."/>
            <person name="Malfatti S."/>
            <person name="Shin M."/>
            <person name="Vergez L."/>
            <person name="Schmutz J."/>
            <person name="Larimer F."/>
            <person name="Land M."/>
            <person name="Hauser L."/>
            <person name="Kyrpides N."/>
            <person name="Lykidis A."/>
            <person name="Sieprawska-Lupa M."/>
            <person name="Whitman W.B."/>
            <person name="Richardson P."/>
        </authorList>
    </citation>
    <scope>NUCLEOTIDE SEQUENCE [LARGE SCALE GENOMIC DNA]</scope>
    <source>
        <strain>ATCC BAA-1280 / DSM 17508 / OCM 812 / Nankai-3</strain>
    </source>
</reference>